<dbReference type="EC" id="2.1.1.-"/>
<dbReference type="EMBL" id="CH916375">
    <property type="protein sequence ID" value="EDV98353.1"/>
    <property type="molecule type" value="Genomic_DNA"/>
</dbReference>
<dbReference type="RefSeq" id="XP_001995281.1">
    <property type="nucleotide sequence ID" value="XM_001995245.1"/>
</dbReference>
<dbReference type="SMR" id="B4JWL5"/>
<dbReference type="FunCoup" id="B4JWL5">
    <property type="interactions" value="2077"/>
</dbReference>
<dbReference type="STRING" id="7222.B4JWL5"/>
<dbReference type="EnsemblMetazoa" id="FBtr0460746">
    <property type="protein sequence ID" value="FBpp0411166"/>
    <property type="gene ID" value="FBgn0130527"/>
</dbReference>
<dbReference type="EnsemblMetazoa" id="XM_043215920.1">
    <property type="protein sequence ID" value="XP_043071855.1"/>
    <property type="gene ID" value="LOC6569154"/>
</dbReference>
<dbReference type="GeneID" id="6569154"/>
<dbReference type="KEGG" id="dgr:6569154"/>
<dbReference type="CTD" id="37664"/>
<dbReference type="eggNOG" id="KOG1501">
    <property type="taxonomic scope" value="Eukaryota"/>
</dbReference>
<dbReference type="HOGENOM" id="CLU_015180_0_0_1"/>
<dbReference type="InParanoid" id="B4JWL5"/>
<dbReference type="OMA" id="CHHDEYS"/>
<dbReference type="OrthoDB" id="412876at2759"/>
<dbReference type="PhylomeDB" id="B4JWL5"/>
<dbReference type="Proteomes" id="UP000001070">
    <property type="component" value="Unassembled WGS sequence"/>
</dbReference>
<dbReference type="GO" id="GO:0042054">
    <property type="term" value="F:histone methyltransferase activity"/>
    <property type="evidence" value="ECO:0007669"/>
    <property type="project" value="TreeGrafter"/>
</dbReference>
<dbReference type="GO" id="GO:0035243">
    <property type="term" value="F:protein-arginine omega-N symmetric methyltransferase activity"/>
    <property type="evidence" value="ECO:0000250"/>
    <property type="project" value="UniProtKB"/>
</dbReference>
<dbReference type="GO" id="GO:0018216">
    <property type="term" value="P:peptidyl-arginine methylation"/>
    <property type="evidence" value="ECO:0000250"/>
    <property type="project" value="UniProtKB"/>
</dbReference>
<dbReference type="CDD" id="cd02440">
    <property type="entry name" value="AdoMet_MTases"/>
    <property type="match status" value="1"/>
</dbReference>
<dbReference type="FunFam" id="2.70.160.11:FF:000014">
    <property type="entry name" value="Protein arginine N-methyltransferase 7"/>
    <property type="match status" value="1"/>
</dbReference>
<dbReference type="FunFam" id="2.70.160.11:FF:000019">
    <property type="entry name" value="Protein arginine N-methyltransferase 7"/>
    <property type="match status" value="1"/>
</dbReference>
<dbReference type="FunFam" id="3.40.50.150:FF:000070">
    <property type="entry name" value="Protein arginine N-methyltransferase 7"/>
    <property type="match status" value="1"/>
</dbReference>
<dbReference type="FunFam" id="3.40.50.150:FF:000071">
    <property type="entry name" value="Protein arginine N-methyltransferase 7"/>
    <property type="match status" value="1"/>
</dbReference>
<dbReference type="Gene3D" id="2.70.160.11">
    <property type="entry name" value="Hnrnp arginine n-methyltransferase1"/>
    <property type="match status" value="2"/>
</dbReference>
<dbReference type="Gene3D" id="3.40.50.150">
    <property type="entry name" value="Vaccinia Virus protein VP39"/>
    <property type="match status" value="2"/>
</dbReference>
<dbReference type="InterPro" id="IPR025799">
    <property type="entry name" value="Arg_MeTrfase"/>
</dbReference>
<dbReference type="InterPro" id="IPR014644">
    <property type="entry name" value="MeTrfase_PRMT7"/>
</dbReference>
<dbReference type="InterPro" id="IPR055135">
    <property type="entry name" value="PRMT_dom"/>
</dbReference>
<dbReference type="InterPro" id="IPR029063">
    <property type="entry name" value="SAM-dependent_MTases_sf"/>
</dbReference>
<dbReference type="PANTHER" id="PTHR11006">
    <property type="entry name" value="PROTEIN ARGININE N-METHYLTRANSFERASE"/>
    <property type="match status" value="1"/>
</dbReference>
<dbReference type="PANTHER" id="PTHR11006:SF4">
    <property type="entry name" value="PROTEIN ARGININE N-METHYLTRANSFERASE 7"/>
    <property type="match status" value="1"/>
</dbReference>
<dbReference type="Pfam" id="PF06325">
    <property type="entry name" value="PrmA"/>
    <property type="match status" value="1"/>
</dbReference>
<dbReference type="Pfam" id="PF22528">
    <property type="entry name" value="PRMT_C"/>
    <property type="match status" value="1"/>
</dbReference>
<dbReference type="PIRSF" id="PIRSF036946">
    <property type="entry name" value="Arg_N-mtase"/>
    <property type="match status" value="1"/>
</dbReference>
<dbReference type="SUPFAM" id="SSF53335">
    <property type="entry name" value="S-adenosyl-L-methionine-dependent methyltransferases"/>
    <property type="match status" value="2"/>
</dbReference>
<dbReference type="PROSITE" id="PS51678">
    <property type="entry name" value="SAM_MT_PRMT"/>
    <property type="match status" value="2"/>
</dbReference>
<feature type="chain" id="PRO_0000373913" description="Protein arginine N-methyltransferase 7">
    <location>
        <begin position="1"/>
        <end position="704"/>
    </location>
</feature>
<feature type="domain" description="SAM-dependent MTase PRMT-type 1" evidence="2">
    <location>
        <begin position="14"/>
        <end position="356"/>
    </location>
</feature>
<feature type="domain" description="SAM-dependent MTase PRMT-type 2" evidence="2">
    <location>
        <begin position="366"/>
        <end position="704"/>
    </location>
</feature>
<reference key="1">
    <citation type="journal article" date="2007" name="Nature">
        <title>Evolution of genes and genomes on the Drosophila phylogeny.</title>
        <authorList>
            <consortium name="Drosophila 12 genomes consortium"/>
        </authorList>
    </citation>
    <scope>NUCLEOTIDE SEQUENCE [LARGE SCALE GENOMIC DNA]</scope>
    <source>
        <strain>Tucson 15287-2541.00</strain>
    </source>
</reference>
<name>ANM7_DROGR</name>
<proteinExistence type="inferred from homology"/>
<evidence type="ECO:0000250" key="1"/>
<evidence type="ECO:0000255" key="2">
    <source>
        <dbReference type="PROSITE-ProRule" id="PRU01015"/>
    </source>
</evidence>
<comment type="function">
    <text evidence="1">Essential arginine methyltransferase that can both catalyze the formation of omega-N monomethylarginine (MMA) and symmetrical dimethylarginine (sDMA). Specifically mediates the symmetrical dimethylation of arginine residues in the small nuclear ribonucleoproteins SmD1 and SmD3 (By similarity).</text>
</comment>
<comment type="similarity">
    <text evidence="2">Belongs to the class I-like SAM-binding methyltransferase superfamily. Protein arginine N-methyltransferase family. PRMT7 subfamily.</text>
</comment>
<organism>
    <name type="scientific">Drosophila grimshawi</name>
    <name type="common">Hawaiian fruit fly</name>
    <name type="synonym">Idiomyia grimshawi</name>
    <dbReference type="NCBI Taxonomy" id="7222"/>
    <lineage>
        <taxon>Eukaryota</taxon>
        <taxon>Metazoa</taxon>
        <taxon>Ecdysozoa</taxon>
        <taxon>Arthropoda</taxon>
        <taxon>Hexapoda</taxon>
        <taxon>Insecta</taxon>
        <taxon>Pterygota</taxon>
        <taxon>Neoptera</taxon>
        <taxon>Endopterygota</taxon>
        <taxon>Diptera</taxon>
        <taxon>Brachycera</taxon>
        <taxon>Muscomorpha</taxon>
        <taxon>Ephydroidea</taxon>
        <taxon>Drosophilidae</taxon>
        <taxon>Drosophila</taxon>
        <taxon>Hawaiian Drosophila</taxon>
    </lineage>
</organism>
<protein>
    <recommendedName>
        <fullName>Protein arginine N-methyltransferase 7</fullName>
        <ecNumber>2.1.1.-</ecNumber>
    </recommendedName>
</protein>
<sequence length="704" mass="79440">MASFGQVINPMTGENTWQERDENYDYHQEVANAGFGDMLHDWERNQKYDAALRKTIAAMREAGREVHVLDIGTGTGILAMMALRAGADTVTACEAFMPMANCAQRILNANGYGDRVRLIRKRSTDIEMGVDMPHRANLLVAELLDTELIGEGAIGIYNHAHNELLTADALCIPARATCYAQAAQSALATQWNSLKMLASLDGDILLKPPAQLLQCSGEAALHDVQLSQLPIDSFHVLTAPTPIFQFDFQRKQAREQQRENILRLQIVRPGSVELIFYWWQIELDDRGEQLLSCAPYWAHPELAQLQRSNSSKPLANVVPWRDHWMQAIYYIPKPLQLHTAGEQFYLRCYHDEYSLWFDAHQTEPPSQPARRHCCTCDLHMTYTRNRIGQLNQGTRNKRYLRYLEQAVHAKESAHLLVLGDGCLLGLASSALGAGSVRCLEPHRFSRRLLGAIAKHNQLKNVSFVESVQQLQPIELAAITHIFAEPYFLNSILPWDNFYFGTLLLQLLEQIPALSVQISPCAARIYALPVEFLDLHKIRTPIGSCEGFDLRLFDDMVQRSAEQAVALVEAQPLWEYPCRALAQPQQLLNVNFDNFGEDKHSHGCLQLTASGDCNGVALWVDWQLAADESPRSIVSSGPSETVVPGQLVKWDMFVRQGVHFISQPTKDRRQTDAGKRQLDWSINFKPRLGELNFNFSLRSSSEKSE</sequence>
<keyword id="KW-0489">Methyltransferase</keyword>
<keyword id="KW-1185">Reference proteome</keyword>
<keyword id="KW-0677">Repeat</keyword>
<keyword id="KW-0949">S-adenosyl-L-methionine</keyword>
<keyword id="KW-0808">Transferase</keyword>
<gene>
    <name type="primary">Art7</name>
    <name type="ORF">GH23070</name>
</gene>
<accession>B4JWL5</accession>